<comment type="similarity">
    <text evidence="1">Belongs to the bacterial ribosomal protein bL28 family.</text>
</comment>
<protein>
    <recommendedName>
        <fullName evidence="1">Large ribosomal subunit protein bL28</fullName>
    </recommendedName>
    <alternativeName>
        <fullName evidence="2">50S ribosomal protein L28</fullName>
    </alternativeName>
</protein>
<keyword id="KW-1185">Reference proteome</keyword>
<keyword id="KW-0687">Ribonucleoprotein</keyword>
<keyword id="KW-0689">Ribosomal protein</keyword>
<organism>
    <name type="scientific">Bifidobacterium animalis subsp. lactis (strain AD011)</name>
    <dbReference type="NCBI Taxonomy" id="442563"/>
    <lineage>
        <taxon>Bacteria</taxon>
        <taxon>Bacillati</taxon>
        <taxon>Actinomycetota</taxon>
        <taxon>Actinomycetes</taxon>
        <taxon>Bifidobacteriales</taxon>
        <taxon>Bifidobacteriaceae</taxon>
        <taxon>Bifidobacterium</taxon>
    </lineage>
</organism>
<proteinExistence type="inferred from homology"/>
<dbReference type="EMBL" id="CP001213">
    <property type="protein sequence ID" value="ACL28549.1"/>
    <property type="molecule type" value="Genomic_DNA"/>
</dbReference>
<dbReference type="RefSeq" id="WP_004268348.1">
    <property type="nucleotide sequence ID" value="NC_011835.1"/>
</dbReference>
<dbReference type="SMR" id="B8DVP8"/>
<dbReference type="STRING" id="442563.BLA_0247"/>
<dbReference type="GeneID" id="29695227"/>
<dbReference type="KEGG" id="bla:BLA_0247"/>
<dbReference type="HOGENOM" id="CLU_064548_7_0_11"/>
<dbReference type="Proteomes" id="UP000002456">
    <property type="component" value="Chromosome"/>
</dbReference>
<dbReference type="GO" id="GO:1990904">
    <property type="term" value="C:ribonucleoprotein complex"/>
    <property type="evidence" value="ECO:0007669"/>
    <property type="project" value="UniProtKB-KW"/>
</dbReference>
<dbReference type="GO" id="GO:0005840">
    <property type="term" value="C:ribosome"/>
    <property type="evidence" value="ECO:0007669"/>
    <property type="project" value="UniProtKB-KW"/>
</dbReference>
<dbReference type="GO" id="GO:0003735">
    <property type="term" value="F:structural constituent of ribosome"/>
    <property type="evidence" value="ECO:0007669"/>
    <property type="project" value="InterPro"/>
</dbReference>
<dbReference type="GO" id="GO:0006412">
    <property type="term" value="P:translation"/>
    <property type="evidence" value="ECO:0007669"/>
    <property type="project" value="UniProtKB-UniRule"/>
</dbReference>
<dbReference type="Gene3D" id="2.30.170.40">
    <property type="entry name" value="Ribosomal protein L28/L24"/>
    <property type="match status" value="1"/>
</dbReference>
<dbReference type="HAMAP" id="MF_00373">
    <property type="entry name" value="Ribosomal_bL28"/>
    <property type="match status" value="1"/>
</dbReference>
<dbReference type="InterPro" id="IPR050096">
    <property type="entry name" value="Bacterial_rp_bL28"/>
</dbReference>
<dbReference type="InterPro" id="IPR026569">
    <property type="entry name" value="Ribosomal_bL28"/>
</dbReference>
<dbReference type="InterPro" id="IPR034704">
    <property type="entry name" value="Ribosomal_bL28/bL31-like_sf"/>
</dbReference>
<dbReference type="InterPro" id="IPR001383">
    <property type="entry name" value="Ribosomal_bL28_bact-type"/>
</dbReference>
<dbReference type="InterPro" id="IPR037147">
    <property type="entry name" value="Ribosomal_bL28_sf"/>
</dbReference>
<dbReference type="NCBIfam" id="TIGR00009">
    <property type="entry name" value="L28"/>
    <property type="match status" value="1"/>
</dbReference>
<dbReference type="PANTHER" id="PTHR39080">
    <property type="entry name" value="50S RIBOSOMAL PROTEIN L28"/>
    <property type="match status" value="1"/>
</dbReference>
<dbReference type="PANTHER" id="PTHR39080:SF1">
    <property type="entry name" value="LARGE RIBOSOMAL SUBUNIT PROTEIN BL28A"/>
    <property type="match status" value="1"/>
</dbReference>
<dbReference type="Pfam" id="PF00830">
    <property type="entry name" value="Ribosomal_L28"/>
    <property type="match status" value="1"/>
</dbReference>
<dbReference type="SUPFAM" id="SSF143800">
    <property type="entry name" value="L28p-like"/>
    <property type="match status" value="1"/>
</dbReference>
<gene>
    <name evidence="1" type="primary">rpmB</name>
    <name type="ordered locus">BLA_0247</name>
</gene>
<name>RL28_BIFA0</name>
<evidence type="ECO:0000255" key="1">
    <source>
        <dbReference type="HAMAP-Rule" id="MF_00373"/>
    </source>
</evidence>
<evidence type="ECO:0000305" key="2"/>
<sequence length="65" mass="7205">MAARCAVCGKGPQTGYTVSHSHIRNKRRFLPNLQPVRTTVDGQNVRLRVCTKCLKAGKVQRVKVA</sequence>
<feature type="chain" id="PRO_1000195904" description="Large ribosomal subunit protein bL28">
    <location>
        <begin position="1"/>
        <end position="65"/>
    </location>
</feature>
<accession>B8DVP8</accession>
<reference key="1">
    <citation type="journal article" date="2009" name="J. Bacteriol.">
        <title>Genome sequence of the probiotic bacterium Bifidobacterium animalis subsp. lactis AD011.</title>
        <authorList>
            <person name="Kim J.F."/>
            <person name="Jeong H."/>
            <person name="Yu D.S."/>
            <person name="Choi S.-H."/>
            <person name="Hur C.-G."/>
            <person name="Park M.-S."/>
            <person name="Yoon S.H."/>
            <person name="Kim D.-W."/>
            <person name="Ji G.E."/>
            <person name="Park H.-S."/>
            <person name="Oh T.K."/>
        </authorList>
    </citation>
    <scope>NUCLEOTIDE SEQUENCE [LARGE SCALE GENOMIC DNA]</scope>
    <source>
        <strain>AD011</strain>
    </source>
</reference>